<accession>P80204</accession>
<gene>
    <name type="primary">Tgfbr1</name>
</gene>
<reference key="1">
    <citation type="journal article" date="1993" name="Dev. Dyn.">
        <title>Developmental expression of four novel serine/threonine kinase receptors homologous to the activin/transforming growth factor-beta type II receptor family.</title>
        <authorList>
            <person name="He W.-W."/>
            <person name="Gustafson M.L."/>
            <person name="Hirobe S."/>
            <person name="Donahoe P.K."/>
        </authorList>
    </citation>
    <scope>NUCLEOTIDE SEQUENCE [MRNA]</scope>
    <source>
        <strain>Sprague-Dawley</strain>
        <tissue>Urogenital ridge</tissue>
    </source>
</reference>
<reference key="2">
    <citation type="journal article" date="1996" name="Cell">
        <title>The immunophilin FKBP12 functions as a common inhibitor of the TGF beta family type I receptors.</title>
        <authorList>
            <person name="Wang T."/>
            <person name="Li B.Y."/>
            <person name="Danielson P.D."/>
            <person name="Shah P.C."/>
            <person name="Rockwell S."/>
            <person name="Lechleider R.J."/>
            <person name="Martin J."/>
            <person name="Manganaro T."/>
            <person name="Donahoe P.K."/>
        </authorList>
    </citation>
    <scope>INTERACTION WITH FKBP1A</scope>
    <scope>ACTIVITY REGULATION</scope>
</reference>
<reference key="3">
    <citation type="journal article" date="2008" name="Nat. Cell Biol.">
        <title>The type I TGF-beta receptor is covalently modified and regulated by sumoylation.</title>
        <authorList>
            <person name="Kang J.S."/>
            <person name="Saunier E.F."/>
            <person name="Akhurst R.J."/>
            <person name="Derynck R."/>
        </authorList>
    </citation>
    <scope>SUMOYLATION AT LYS-389</scope>
</reference>
<sequence length="501" mass="56000">MEAASAALRRCLLLIVLVAAATLLPGAKALQCFCHLCTKDNFTCETDGLCFVSVTETTDKVIHNSMCIAEIDLIPRDRPFVCAPSSKTGAVTYCCNQDHCNKIELPTTGPFSEKQSAGLGPVELAAVIAGPVCFVCIALMLMVYICHNRTVIHHRVPNEEDPSLDRPFISEGTTLKDLIYDMTTSGSGSGLPLLVQRTIARTIVLQESIGKGRFGEVWRGKWRGEEVAVKIFSSREERSWFREAEIYQTVMLRHENILGFIAADNKDNGTWTQLWLVSDYHEHGSLFDYLNRYTVTVEGMIKLALSTASGLAHLHMEIVGTQGKPAIAHRDLKSKNILVKKNGTCCIADLGLAVRHDSATDTIDIAPNHRVGTKRYMAPEVLDDSINMKHFESFKRADIYAMGLVFWEIARRCSIGGIHEDYQLPYYDLVPSDPSVEEMRKVVCEQKLRPNIPNRWQSCEALRVMAKIMRECWYANGAARLTALRIKKTLSQLSQQEGIKM</sequence>
<dbReference type="EC" id="2.7.11.30"/>
<dbReference type="EMBL" id="L26110">
    <property type="protein sequence ID" value="AAA83216.1"/>
    <property type="molecule type" value="mRNA"/>
</dbReference>
<dbReference type="RefSeq" id="NP_001416585.1">
    <property type="nucleotide sequence ID" value="NM_001429656.1"/>
</dbReference>
<dbReference type="RefSeq" id="XP_006238092.2">
    <property type="nucleotide sequence ID" value="XM_006238030.3"/>
</dbReference>
<dbReference type="SMR" id="P80204"/>
<dbReference type="BioGRID" id="248223">
    <property type="interactions" value="2"/>
</dbReference>
<dbReference type="CORUM" id="P80204"/>
<dbReference type="FunCoup" id="P80204">
    <property type="interactions" value="3141"/>
</dbReference>
<dbReference type="IntAct" id="P80204">
    <property type="interactions" value="4"/>
</dbReference>
<dbReference type="MINT" id="P80204"/>
<dbReference type="STRING" id="10116.ENSRNOP00000009452"/>
<dbReference type="ChEMBL" id="CHEMBL4523265"/>
<dbReference type="GlyCosmos" id="P80204">
    <property type="glycosylation" value="1 site, No reported glycans"/>
</dbReference>
<dbReference type="GlyGen" id="P80204">
    <property type="glycosylation" value="1 site"/>
</dbReference>
<dbReference type="PhosphoSitePlus" id="P80204"/>
<dbReference type="PaxDb" id="10116-ENSRNOP00000009452"/>
<dbReference type="GeneID" id="29591"/>
<dbReference type="UCSC" id="RGD:3852">
    <property type="organism name" value="rat"/>
</dbReference>
<dbReference type="AGR" id="RGD:3852"/>
<dbReference type="CTD" id="7046"/>
<dbReference type="RGD" id="3852">
    <property type="gene designation" value="Tgfbr1"/>
</dbReference>
<dbReference type="eggNOG" id="KOG2052">
    <property type="taxonomic scope" value="Eukaryota"/>
</dbReference>
<dbReference type="HOGENOM" id="CLU_000288_8_1_1"/>
<dbReference type="InParanoid" id="P80204"/>
<dbReference type="OrthoDB" id="3072at9989"/>
<dbReference type="PhylomeDB" id="P80204"/>
<dbReference type="TreeFam" id="TF314724"/>
<dbReference type="BRENDA" id="2.7.10.2">
    <property type="organism ID" value="5301"/>
</dbReference>
<dbReference type="BRENDA" id="2.7.11.30">
    <property type="organism ID" value="5301"/>
</dbReference>
<dbReference type="Reactome" id="R-RNO-2173788">
    <property type="pathway name" value="Downregulation of TGF-beta receptor signaling"/>
</dbReference>
<dbReference type="Reactome" id="R-RNO-2173789">
    <property type="pathway name" value="TGF-beta receptor signaling activates SMADs"/>
</dbReference>
<dbReference type="Reactome" id="R-RNO-2173791">
    <property type="pathway name" value="TGF-beta receptor signaling in EMT (epithelial to mesenchymal transition)"/>
</dbReference>
<dbReference type="Reactome" id="R-RNO-5689880">
    <property type="pathway name" value="Ub-specific processing proteases"/>
</dbReference>
<dbReference type="Reactome" id="R-RNO-9839389">
    <property type="pathway name" value="TGFBR3 regulates TGF-beta signaling"/>
</dbReference>
<dbReference type="PRO" id="PR:P80204"/>
<dbReference type="Proteomes" id="UP000002494">
    <property type="component" value="Unplaced"/>
</dbReference>
<dbReference type="GO" id="GO:0048179">
    <property type="term" value="C:activin receptor complex"/>
    <property type="evidence" value="ECO:0000318"/>
    <property type="project" value="GO_Central"/>
</dbReference>
<dbReference type="GO" id="GO:0016324">
    <property type="term" value="C:apical plasma membrane"/>
    <property type="evidence" value="ECO:0000314"/>
    <property type="project" value="RGD"/>
</dbReference>
<dbReference type="GO" id="GO:0016323">
    <property type="term" value="C:basolateral plasma membrane"/>
    <property type="evidence" value="ECO:0000314"/>
    <property type="project" value="RGD"/>
</dbReference>
<dbReference type="GO" id="GO:0005923">
    <property type="term" value="C:bicellular tight junction"/>
    <property type="evidence" value="ECO:0000266"/>
    <property type="project" value="RGD"/>
</dbReference>
<dbReference type="GO" id="GO:0005901">
    <property type="term" value="C:caveola"/>
    <property type="evidence" value="ECO:0000314"/>
    <property type="project" value="MGI"/>
</dbReference>
<dbReference type="GO" id="GO:0009986">
    <property type="term" value="C:cell surface"/>
    <property type="evidence" value="ECO:0000250"/>
    <property type="project" value="UniProtKB"/>
</dbReference>
<dbReference type="GO" id="GO:0005768">
    <property type="term" value="C:endosome"/>
    <property type="evidence" value="ECO:0000250"/>
    <property type="project" value="UniProtKB"/>
</dbReference>
<dbReference type="GO" id="GO:0045121">
    <property type="term" value="C:membrane raft"/>
    <property type="evidence" value="ECO:0000314"/>
    <property type="project" value="MGI"/>
</dbReference>
<dbReference type="GO" id="GO:0005634">
    <property type="term" value="C:nucleus"/>
    <property type="evidence" value="ECO:0000250"/>
    <property type="project" value="UniProtKB"/>
</dbReference>
<dbReference type="GO" id="GO:0005886">
    <property type="term" value="C:plasma membrane"/>
    <property type="evidence" value="ECO:0000266"/>
    <property type="project" value="RGD"/>
</dbReference>
<dbReference type="GO" id="GO:0032991">
    <property type="term" value="C:protein-containing complex"/>
    <property type="evidence" value="ECO:0000314"/>
    <property type="project" value="RGD"/>
</dbReference>
<dbReference type="GO" id="GO:0043235">
    <property type="term" value="C:receptor complex"/>
    <property type="evidence" value="ECO:0000266"/>
    <property type="project" value="RGD"/>
</dbReference>
<dbReference type="GO" id="GO:0070021">
    <property type="term" value="C:transforming growth factor beta ligand-receptor complex"/>
    <property type="evidence" value="ECO:0000266"/>
    <property type="project" value="RGD"/>
</dbReference>
<dbReference type="GO" id="GO:0048185">
    <property type="term" value="F:activin binding"/>
    <property type="evidence" value="ECO:0000318"/>
    <property type="project" value="GO_Central"/>
</dbReference>
<dbReference type="GO" id="GO:0016361">
    <property type="term" value="F:activin receptor activity, type I"/>
    <property type="evidence" value="ECO:0000318"/>
    <property type="project" value="GO_Central"/>
</dbReference>
<dbReference type="GO" id="GO:0005524">
    <property type="term" value="F:ATP binding"/>
    <property type="evidence" value="ECO:0000315"/>
    <property type="project" value="RGD"/>
</dbReference>
<dbReference type="GO" id="GO:0070411">
    <property type="term" value="F:I-SMAD binding"/>
    <property type="evidence" value="ECO:0000266"/>
    <property type="project" value="RGD"/>
</dbReference>
<dbReference type="GO" id="GO:0046872">
    <property type="term" value="F:metal ion binding"/>
    <property type="evidence" value="ECO:0007669"/>
    <property type="project" value="UniProtKB-KW"/>
</dbReference>
<dbReference type="GO" id="GO:0004672">
    <property type="term" value="F:protein kinase activity"/>
    <property type="evidence" value="ECO:0000266"/>
    <property type="project" value="RGD"/>
</dbReference>
<dbReference type="GO" id="GO:0004674">
    <property type="term" value="F:protein serine/threonine kinase activity"/>
    <property type="evidence" value="ECO:0000315"/>
    <property type="project" value="RGD"/>
</dbReference>
<dbReference type="GO" id="GO:0044877">
    <property type="term" value="F:protein-containing complex binding"/>
    <property type="evidence" value="ECO:0000315"/>
    <property type="project" value="RGD"/>
</dbReference>
<dbReference type="GO" id="GO:0005102">
    <property type="term" value="F:signaling receptor binding"/>
    <property type="evidence" value="ECO:0000266"/>
    <property type="project" value="RGD"/>
</dbReference>
<dbReference type="GO" id="GO:0046332">
    <property type="term" value="F:SMAD binding"/>
    <property type="evidence" value="ECO:0000266"/>
    <property type="project" value="RGD"/>
</dbReference>
<dbReference type="GO" id="GO:0050431">
    <property type="term" value="F:transforming growth factor beta binding"/>
    <property type="evidence" value="ECO:0000314"/>
    <property type="project" value="RGD"/>
</dbReference>
<dbReference type="GO" id="GO:0005024">
    <property type="term" value="F:transforming growth factor beta receptor activity"/>
    <property type="evidence" value="ECO:0000266"/>
    <property type="project" value="RGD"/>
</dbReference>
<dbReference type="GO" id="GO:0005025">
    <property type="term" value="F:transforming growth factor beta receptor activity, type I"/>
    <property type="evidence" value="ECO:0000315"/>
    <property type="project" value="RGD"/>
</dbReference>
<dbReference type="GO" id="GO:0004675">
    <property type="term" value="F:transmembrane receptor protein serine/threonine kinase activity"/>
    <property type="evidence" value="ECO:0000266"/>
    <property type="project" value="RGD"/>
</dbReference>
<dbReference type="GO" id="GO:0005114">
    <property type="term" value="F:type II transforming growth factor beta receptor binding"/>
    <property type="evidence" value="ECO:0000266"/>
    <property type="project" value="RGD"/>
</dbReference>
<dbReference type="GO" id="GO:0031625">
    <property type="term" value="F:ubiquitin protein ligase binding"/>
    <property type="evidence" value="ECO:0000353"/>
    <property type="project" value="RGD"/>
</dbReference>
<dbReference type="GO" id="GO:0032924">
    <property type="term" value="P:activin receptor signaling pathway"/>
    <property type="evidence" value="ECO:0000250"/>
    <property type="project" value="AgBase"/>
</dbReference>
<dbReference type="GO" id="GO:0001525">
    <property type="term" value="P:angiogenesis"/>
    <property type="evidence" value="ECO:0000266"/>
    <property type="project" value="RGD"/>
</dbReference>
<dbReference type="GO" id="GO:0060978">
    <property type="term" value="P:angiogenesis involved in coronary vascular morphogenesis"/>
    <property type="evidence" value="ECO:0000266"/>
    <property type="project" value="RGD"/>
</dbReference>
<dbReference type="GO" id="GO:0031100">
    <property type="term" value="P:animal organ regeneration"/>
    <property type="evidence" value="ECO:0000270"/>
    <property type="project" value="RGD"/>
</dbReference>
<dbReference type="GO" id="GO:0009952">
    <property type="term" value="P:anterior/posterior pattern specification"/>
    <property type="evidence" value="ECO:0000266"/>
    <property type="project" value="RGD"/>
</dbReference>
<dbReference type="GO" id="GO:0006915">
    <property type="term" value="P:apoptotic process"/>
    <property type="evidence" value="ECO:0000266"/>
    <property type="project" value="RGD"/>
</dbReference>
<dbReference type="GO" id="GO:0048844">
    <property type="term" value="P:artery morphogenesis"/>
    <property type="evidence" value="ECO:0000266"/>
    <property type="project" value="RGD"/>
</dbReference>
<dbReference type="GO" id="GO:0001824">
    <property type="term" value="P:blastocyst development"/>
    <property type="evidence" value="ECO:0000266"/>
    <property type="project" value="RGD"/>
</dbReference>
<dbReference type="GO" id="GO:0060317">
    <property type="term" value="P:cardiac epithelial to mesenchymal transition"/>
    <property type="evidence" value="ECO:0000250"/>
    <property type="project" value="AgBase"/>
</dbReference>
<dbReference type="GO" id="GO:0048870">
    <property type="term" value="P:cell motility"/>
    <property type="evidence" value="ECO:0000266"/>
    <property type="project" value="RGD"/>
</dbReference>
<dbReference type="GO" id="GO:0071363">
    <property type="term" value="P:cellular response to growth factor stimulus"/>
    <property type="evidence" value="ECO:0000318"/>
    <property type="project" value="GO_Central"/>
</dbReference>
<dbReference type="GO" id="GO:0071560">
    <property type="term" value="P:cellular response to transforming growth factor beta stimulus"/>
    <property type="evidence" value="ECO:0000266"/>
    <property type="project" value="RGD"/>
</dbReference>
<dbReference type="GO" id="GO:0030199">
    <property type="term" value="P:collagen fibril organization"/>
    <property type="evidence" value="ECO:0000266"/>
    <property type="project" value="RGD"/>
</dbReference>
<dbReference type="GO" id="GO:0060982">
    <property type="term" value="P:coronary artery morphogenesis"/>
    <property type="evidence" value="ECO:0000266"/>
    <property type="project" value="RGD"/>
</dbReference>
<dbReference type="GO" id="GO:0048565">
    <property type="term" value="P:digestive tract development"/>
    <property type="evidence" value="ECO:0000270"/>
    <property type="project" value="RGD"/>
</dbReference>
<dbReference type="GO" id="GO:0007566">
    <property type="term" value="P:embryo implantation"/>
    <property type="evidence" value="ECO:0000270"/>
    <property type="project" value="RGD"/>
</dbReference>
<dbReference type="GO" id="GO:0048701">
    <property type="term" value="P:embryonic cranial skeleton morphogenesis"/>
    <property type="evidence" value="ECO:0000266"/>
    <property type="project" value="RGD"/>
</dbReference>
<dbReference type="GO" id="GO:0042118">
    <property type="term" value="P:endothelial cell activation"/>
    <property type="evidence" value="ECO:0000250"/>
    <property type="project" value="AgBase"/>
</dbReference>
<dbReference type="GO" id="GO:0043542">
    <property type="term" value="P:endothelial cell migration"/>
    <property type="evidence" value="ECO:0000266"/>
    <property type="project" value="RGD"/>
</dbReference>
<dbReference type="GO" id="GO:0001935">
    <property type="term" value="P:endothelial cell proliferation"/>
    <property type="evidence" value="ECO:0000266"/>
    <property type="project" value="RGD"/>
</dbReference>
<dbReference type="GO" id="GO:1905223">
    <property type="term" value="P:epicardium morphogenesis"/>
    <property type="evidence" value="ECO:0000266"/>
    <property type="project" value="RGD"/>
</dbReference>
<dbReference type="GO" id="GO:0001837">
    <property type="term" value="P:epithelial to mesenchymal transition"/>
    <property type="evidence" value="ECO:0000266"/>
    <property type="project" value="RGD"/>
</dbReference>
<dbReference type="GO" id="GO:0046847">
    <property type="term" value="P:filopodium assembly"/>
    <property type="evidence" value="ECO:0000266"/>
    <property type="project" value="RGD"/>
</dbReference>
<dbReference type="GO" id="GO:0008354">
    <property type="term" value="P:germ cell migration"/>
    <property type="evidence" value="ECO:0000266"/>
    <property type="project" value="RGD"/>
</dbReference>
<dbReference type="GO" id="GO:0007507">
    <property type="term" value="P:heart development"/>
    <property type="evidence" value="ECO:0000250"/>
    <property type="project" value="AgBase"/>
</dbReference>
<dbReference type="GO" id="GO:0001701">
    <property type="term" value="P:in utero embryonic development"/>
    <property type="evidence" value="ECO:0000266"/>
    <property type="project" value="RGD"/>
</dbReference>
<dbReference type="GO" id="GO:0035556">
    <property type="term" value="P:intracellular signal transduction"/>
    <property type="evidence" value="ECO:0000250"/>
    <property type="project" value="AgBase"/>
</dbReference>
<dbReference type="GO" id="GO:0001822">
    <property type="term" value="P:kidney development"/>
    <property type="evidence" value="ECO:0000266"/>
    <property type="project" value="RGD"/>
</dbReference>
<dbReference type="GO" id="GO:0002088">
    <property type="term" value="P:lens development in camera-type eye"/>
    <property type="evidence" value="ECO:0000266"/>
    <property type="project" value="RGD"/>
</dbReference>
<dbReference type="GO" id="GO:0030324">
    <property type="term" value="P:lung development"/>
    <property type="evidence" value="ECO:0000270"/>
    <property type="project" value="RGD"/>
</dbReference>
<dbReference type="GO" id="GO:0008584">
    <property type="term" value="P:male gonad development"/>
    <property type="evidence" value="ECO:0000266"/>
    <property type="project" value="RGD"/>
</dbReference>
<dbReference type="GO" id="GO:0048762">
    <property type="term" value="P:mesenchymal cell differentiation"/>
    <property type="evidence" value="ECO:0000250"/>
    <property type="project" value="AgBase"/>
</dbReference>
<dbReference type="GO" id="GO:0036446">
    <property type="term" value="P:myofibroblast differentiation"/>
    <property type="evidence" value="ECO:0000266"/>
    <property type="project" value="RGD"/>
</dbReference>
<dbReference type="GO" id="GO:0043066">
    <property type="term" value="P:negative regulation of apoptotic process"/>
    <property type="evidence" value="ECO:0000266"/>
    <property type="project" value="RGD"/>
</dbReference>
<dbReference type="GO" id="GO:0030336">
    <property type="term" value="P:negative regulation of cell migration"/>
    <property type="evidence" value="ECO:0000266"/>
    <property type="project" value="RGD"/>
</dbReference>
<dbReference type="GO" id="GO:0032331">
    <property type="term" value="P:negative regulation of chondrocyte differentiation"/>
    <property type="evidence" value="ECO:0000266"/>
    <property type="project" value="RGD"/>
</dbReference>
<dbReference type="GO" id="GO:0045602">
    <property type="term" value="P:negative regulation of endothelial cell differentiation"/>
    <property type="evidence" value="ECO:0000315"/>
    <property type="project" value="RGD"/>
</dbReference>
<dbReference type="GO" id="GO:0001937">
    <property type="term" value="P:negative regulation of endothelial cell proliferation"/>
    <property type="evidence" value="ECO:0000266"/>
    <property type="project" value="RGD"/>
</dbReference>
<dbReference type="GO" id="GO:2001237">
    <property type="term" value="P:negative regulation of extrinsic apoptotic signaling pathway"/>
    <property type="evidence" value="ECO:0000266"/>
    <property type="project" value="RGD"/>
</dbReference>
<dbReference type="GO" id="GO:1902894">
    <property type="term" value="P:negative regulation of miRNA transcription"/>
    <property type="evidence" value="ECO:0000315"/>
    <property type="project" value="BHF-UCL"/>
</dbReference>
<dbReference type="GO" id="GO:0007399">
    <property type="term" value="P:nervous system development"/>
    <property type="evidence" value="ECO:0000318"/>
    <property type="project" value="GO_Central"/>
</dbReference>
<dbReference type="GO" id="GO:0048663">
    <property type="term" value="P:neuron fate commitment"/>
    <property type="evidence" value="ECO:0000266"/>
    <property type="project" value="RGD"/>
</dbReference>
<dbReference type="GO" id="GO:0060017">
    <property type="term" value="P:parathyroid gland development"/>
    <property type="evidence" value="ECO:0000266"/>
    <property type="project" value="RGD"/>
</dbReference>
<dbReference type="GO" id="GO:0060037">
    <property type="term" value="P:pharyngeal system development"/>
    <property type="evidence" value="ECO:0000266"/>
    <property type="project" value="RGD"/>
</dbReference>
<dbReference type="GO" id="GO:0043065">
    <property type="term" value="P:positive regulation of apoptotic process"/>
    <property type="evidence" value="ECO:0000266"/>
    <property type="project" value="RGD"/>
</dbReference>
<dbReference type="GO" id="GO:2001235">
    <property type="term" value="P:positive regulation of apoptotic signaling pathway"/>
    <property type="evidence" value="ECO:0000266"/>
    <property type="project" value="RGD"/>
</dbReference>
<dbReference type="GO" id="GO:0030307">
    <property type="term" value="P:positive regulation of cell growth"/>
    <property type="evidence" value="ECO:0000266"/>
    <property type="project" value="RGD"/>
</dbReference>
<dbReference type="GO" id="GO:0030335">
    <property type="term" value="P:positive regulation of cell migration"/>
    <property type="evidence" value="ECO:0000266"/>
    <property type="project" value="RGD"/>
</dbReference>
<dbReference type="GO" id="GO:0008284">
    <property type="term" value="P:positive regulation of cell population proliferation"/>
    <property type="evidence" value="ECO:0000266"/>
    <property type="project" value="RGD"/>
</dbReference>
<dbReference type="GO" id="GO:0045893">
    <property type="term" value="P:positive regulation of DNA-templated transcription"/>
    <property type="evidence" value="ECO:0000250"/>
    <property type="project" value="AgBase"/>
</dbReference>
<dbReference type="GO" id="GO:0001938">
    <property type="term" value="P:positive regulation of endothelial cell proliferation"/>
    <property type="evidence" value="ECO:0000250"/>
    <property type="project" value="AgBase"/>
</dbReference>
<dbReference type="GO" id="GO:0010718">
    <property type="term" value="P:positive regulation of epithelial to mesenchymal transition"/>
    <property type="evidence" value="ECO:0000266"/>
    <property type="project" value="RGD"/>
</dbReference>
<dbReference type="GO" id="GO:1905007">
    <property type="term" value="P:positive regulation of epithelial to mesenchymal transition involved in endocardial cushion formation"/>
    <property type="evidence" value="ECO:0000266"/>
    <property type="project" value="RGD"/>
</dbReference>
<dbReference type="GO" id="GO:1901203">
    <property type="term" value="P:positive regulation of extracellular matrix assembly"/>
    <property type="evidence" value="ECO:0000266"/>
    <property type="project" value="RGD"/>
</dbReference>
<dbReference type="GO" id="GO:0051491">
    <property type="term" value="P:positive regulation of filopodium assembly"/>
    <property type="evidence" value="ECO:0000266"/>
    <property type="project" value="RGD"/>
</dbReference>
<dbReference type="GO" id="GO:0010628">
    <property type="term" value="P:positive regulation of gene expression"/>
    <property type="evidence" value="ECO:0000250"/>
    <property type="project" value="AgBase"/>
</dbReference>
<dbReference type="GO" id="GO:1902462">
    <property type="term" value="P:positive regulation of mesenchymal stem cell proliferation"/>
    <property type="evidence" value="ECO:0000266"/>
    <property type="project" value="RGD"/>
</dbReference>
<dbReference type="GO" id="GO:1902895">
    <property type="term" value="P:positive regulation of miRNA transcription"/>
    <property type="evidence" value="ECO:0000315"/>
    <property type="project" value="BHF-UCL"/>
</dbReference>
<dbReference type="GO" id="GO:0051897">
    <property type="term" value="P:positive regulation of phosphatidylinositol 3-kinase/protein kinase B signal transduction"/>
    <property type="evidence" value="ECO:0000266"/>
    <property type="project" value="RGD"/>
</dbReference>
<dbReference type="GO" id="GO:0060391">
    <property type="term" value="P:positive regulation of SMAD protein signal transduction"/>
    <property type="evidence" value="ECO:0000266"/>
    <property type="project" value="RGD"/>
</dbReference>
<dbReference type="GO" id="GO:0051496">
    <property type="term" value="P:positive regulation of stress fiber assembly"/>
    <property type="evidence" value="ECO:0000266"/>
    <property type="project" value="RGD"/>
</dbReference>
<dbReference type="GO" id="GO:1905075">
    <property type="term" value="P:positive regulation of tight junction disassembly"/>
    <property type="evidence" value="ECO:0000266"/>
    <property type="project" value="RGD"/>
</dbReference>
<dbReference type="GO" id="GO:1904018">
    <property type="term" value="P:positive regulation of vasculature development"/>
    <property type="evidence" value="ECO:0000266"/>
    <property type="project" value="RGD"/>
</dbReference>
<dbReference type="GO" id="GO:0009791">
    <property type="term" value="P:post-embryonic development"/>
    <property type="evidence" value="ECO:0000266"/>
    <property type="project" value="RGD"/>
</dbReference>
<dbReference type="GO" id="GO:0060043">
    <property type="term" value="P:regulation of cardiac muscle cell proliferation"/>
    <property type="evidence" value="ECO:0000266"/>
    <property type="project" value="RGD"/>
</dbReference>
<dbReference type="GO" id="GO:0006355">
    <property type="term" value="P:regulation of DNA-templated transcription"/>
    <property type="evidence" value="ECO:0000266"/>
    <property type="project" value="RGD"/>
</dbReference>
<dbReference type="GO" id="GO:0010717">
    <property type="term" value="P:regulation of epithelial to mesenchymal transition"/>
    <property type="evidence" value="ECO:0000250"/>
    <property type="project" value="AgBase"/>
</dbReference>
<dbReference type="GO" id="GO:0010468">
    <property type="term" value="P:regulation of gene expression"/>
    <property type="evidence" value="ECO:0000250"/>
    <property type="project" value="AgBase"/>
</dbReference>
<dbReference type="GO" id="GO:0031396">
    <property type="term" value="P:regulation of protein ubiquitination"/>
    <property type="evidence" value="ECO:0000266"/>
    <property type="project" value="RGD"/>
</dbReference>
<dbReference type="GO" id="GO:0070723">
    <property type="term" value="P:response to cholesterol"/>
    <property type="evidence" value="ECO:0000266"/>
    <property type="project" value="RGD"/>
</dbReference>
<dbReference type="GO" id="GO:0051602">
    <property type="term" value="P:response to electrical stimulus"/>
    <property type="evidence" value="ECO:0000270"/>
    <property type="project" value="RGD"/>
</dbReference>
<dbReference type="GO" id="GO:0043627">
    <property type="term" value="P:response to estrogen"/>
    <property type="evidence" value="ECO:0000314"/>
    <property type="project" value="RGD"/>
</dbReference>
<dbReference type="GO" id="GO:0001666">
    <property type="term" value="P:response to hypoxia"/>
    <property type="evidence" value="ECO:0000270"/>
    <property type="project" value="RGD"/>
</dbReference>
<dbReference type="GO" id="GO:0034695">
    <property type="term" value="P:response to prostaglandin E"/>
    <property type="evidence" value="ECO:0000270"/>
    <property type="project" value="RGD"/>
</dbReference>
<dbReference type="GO" id="GO:0009636">
    <property type="term" value="P:response to toxic substance"/>
    <property type="evidence" value="ECO:0000270"/>
    <property type="project" value="RGD"/>
</dbReference>
<dbReference type="GO" id="GO:0060021">
    <property type="term" value="P:roof of mouth development"/>
    <property type="evidence" value="ECO:0000266"/>
    <property type="project" value="RGD"/>
</dbReference>
<dbReference type="GO" id="GO:0007165">
    <property type="term" value="P:signal transduction"/>
    <property type="evidence" value="ECO:0000266"/>
    <property type="project" value="RGD"/>
</dbReference>
<dbReference type="GO" id="GO:0001501">
    <property type="term" value="P:skeletal system development"/>
    <property type="evidence" value="ECO:0000266"/>
    <property type="project" value="RGD"/>
</dbReference>
<dbReference type="GO" id="GO:0048705">
    <property type="term" value="P:skeletal system morphogenesis"/>
    <property type="evidence" value="ECO:0000266"/>
    <property type="project" value="RGD"/>
</dbReference>
<dbReference type="GO" id="GO:0048538">
    <property type="term" value="P:thymus development"/>
    <property type="evidence" value="ECO:0000266"/>
    <property type="project" value="RGD"/>
</dbReference>
<dbReference type="GO" id="GO:0007179">
    <property type="term" value="P:transforming growth factor beta receptor signaling pathway"/>
    <property type="evidence" value="ECO:0000315"/>
    <property type="project" value="RGD"/>
</dbReference>
<dbReference type="GO" id="GO:0061450">
    <property type="term" value="P:trophoblast cell migration"/>
    <property type="evidence" value="ECO:0000266"/>
    <property type="project" value="RGD"/>
</dbReference>
<dbReference type="GO" id="GO:0101023">
    <property type="term" value="P:vascular endothelial cell proliferation"/>
    <property type="evidence" value="ECO:0000318"/>
    <property type="project" value="GO_Central"/>
</dbReference>
<dbReference type="GO" id="GO:0003223">
    <property type="term" value="P:ventricular compact myocardium morphogenesis"/>
    <property type="evidence" value="ECO:0000266"/>
    <property type="project" value="RGD"/>
</dbReference>
<dbReference type="GO" id="GO:0060412">
    <property type="term" value="P:ventricular septum morphogenesis"/>
    <property type="evidence" value="ECO:0000266"/>
    <property type="project" value="RGD"/>
</dbReference>
<dbReference type="GO" id="GO:0003222">
    <property type="term" value="P:ventricular trabecula myocardium morphogenesis"/>
    <property type="evidence" value="ECO:0000266"/>
    <property type="project" value="RGD"/>
</dbReference>
<dbReference type="CDD" id="cd14143">
    <property type="entry name" value="STKc_TGFbR1_ACVR1b_ACVR1c"/>
    <property type="match status" value="1"/>
</dbReference>
<dbReference type="CDD" id="cd23537">
    <property type="entry name" value="TFP_LU_ECD_ALK5"/>
    <property type="match status" value="1"/>
</dbReference>
<dbReference type="FunFam" id="1.10.510.10:FF:000045">
    <property type="entry name" value="Receptor protein serine/threonine kinase"/>
    <property type="match status" value="1"/>
</dbReference>
<dbReference type="FunFam" id="2.10.60.10:FF:000005">
    <property type="entry name" value="Receptor protein serine/threonine kinase"/>
    <property type="match status" value="1"/>
</dbReference>
<dbReference type="FunFam" id="3.30.200.20:FF:000023">
    <property type="entry name" value="Receptor protein serine/threonine kinase"/>
    <property type="match status" value="1"/>
</dbReference>
<dbReference type="Gene3D" id="2.10.60.10">
    <property type="entry name" value="CD59"/>
    <property type="match status" value="1"/>
</dbReference>
<dbReference type="Gene3D" id="3.30.200.20">
    <property type="entry name" value="Phosphorylase Kinase, domain 1"/>
    <property type="match status" value="1"/>
</dbReference>
<dbReference type="Gene3D" id="1.10.510.10">
    <property type="entry name" value="Transferase(Phosphotransferase) domain 1"/>
    <property type="match status" value="1"/>
</dbReference>
<dbReference type="InterPro" id="IPR000472">
    <property type="entry name" value="Activin_recp"/>
</dbReference>
<dbReference type="InterPro" id="IPR003605">
    <property type="entry name" value="GS_dom"/>
</dbReference>
<dbReference type="InterPro" id="IPR011009">
    <property type="entry name" value="Kinase-like_dom_sf"/>
</dbReference>
<dbReference type="InterPro" id="IPR000719">
    <property type="entry name" value="Prot_kinase_dom"/>
</dbReference>
<dbReference type="InterPro" id="IPR017441">
    <property type="entry name" value="Protein_kinase_ATP_BS"/>
</dbReference>
<dbReference type="InterPro" id="IPR008271">
    <property type="entry name" value="Ser/Thr_kinase_AS"/>
</dbReference>
<dbReference type="InterPro" id="IPR045860">
    <property type="entry name" value="Snake_toxin-like_sf"/>
</dbReference>
<dbReference type="InterPro" id="IPR000333">
    <property type="entry name" value="TGFB_receptor"/>
</dbReference>
<dbReference type="PANTHER" id="PTHR23255:SF61">
    <property type="entry name" value="TGF-BETA RECEPTOR TYPE-1"/>
    <property type="match status" value="1"/>
</dbReference>
<dbReference type="PANTHER" id="PTHR23255">
    <property type="entry name" value="TRANSFORMING GROWTH FACTOR-BETA RECEPTOR TYPE I AND II"/>
    <property type="match status" value="1"/>
</dbReference>
<dbReference type="Pfam" id="PF01064">
    <property type="entry name" value="Activin_recp"/>
    <property type="match status" value="1"/>
</dbReference>
<dbReference type="Pfam" id="PF00069">
    <property type="entry name" value="Pkinase"/>
    <property type="match status" value="1"/>
</dbReference>
<dbReference type="Pfam" id="PF08515">
    <property type="entry name" value="TGF_beta_GS"/>
    <property type="match status" value="1"/>
</dbReference>
<dbReference type="SMART" id="SM00467">
    <property type="entry name" value="GS"/>
    <property type="match status" value="1"/>
</dbReference>
<dbReference type="SMART" id="SM00220">
    <property type="entry name" value="S_TKc"/>
    <property type="match status" value="1"/>
</dbReference>
<dbReference type="SUPFAM" id="SSF56112">
    <property type="entry name" value="Protein kinase-like (PK-like)"/>
    <property type="match status" value="1"/>
</dbReference>
<dbReference type="SUPFAM" id="SSF57302">
    <property type="entry name" value="Snake toxin-like"/>
    <property type="match status" value="1"/>
</dbReference>
<dbReference type="PROSITE" id="PS51256">
    <property type="entry name" value="GS"/>
    <property type="match status" value="1"/>
</dbReference>
<dbReference type="PROSITE" id="PS00107">
    <property type="entry name" value="PROTEIN_KINASE_ATP"/>
    <property type="match status" value="1"/>
</dbReference>
<dbReference type="PROSITE" id="PS50011">
    <property type="entry name" value="PROTEIN_KINASE_DOM"/>
    <property type="match status" value="1"/>
</dbReference>
<dbReference type="PROSITE" id="PS00108">
    <property type="entry name" value="PROTEIN_KINASE_ST"/>
    <property type="match status" value="1"/>
</dbReference>
<comment type="function">
    <text evidence="2">Transmembrane serine/threonine kinase forming with the TGF-beta type II serine/threonine kinase receptor, TGFBR2, the non-promiscuous receptor for the TGF-beta cytokines TGFB1, TGFB2 and TGFB3. Transduces the TGFB1, TGFB2 and TGFB3 signal from the cell surface to the cytoplasm and is thus regulating a plethora of physiological and pathological processes including cell cycle arrest in epithelial and hematopoietic cells, control of mesenchymal cell proliferation and differentiation, wound healing, extracellular matrix production, immunosuppression and carcinogenesis. The formation of the receptor complex composed of 2 TGFBR1 and 2 TGFBR2 molecules symmetrically bound to the cytokine dimer results in the phosphorylation and the activation of TGFBR1 by the constitutively active TGFBR2. Activated TGFBR1 phosphorylates SMAD2 which dissociates from the receptor and interacts with SMAD4. The SMAD2-SMAD4 complex is subsequently translocated to the nucleus where it modulates the transcription of the TGF-beta-regulated genes. This constitutes the canonical SMAD-dependent TGF-beta signaling cascade. Also involved in non-canonical, SMAD-independent TGF-beta signaling pathways. For instance, TGFBR1 induces TRAF6 autoubiquitination which in turn results in MAP3K7 ubiquitination and activation to trigger apoptosis. Also regulates epithelial to mesenchymal transition through a SMAD-independent signaling pathway through PARD6A phosphorylation and activation (By similarity).</text>
</comment>
<comment type="catalytic activity">
    <reaction>
        <text>L-threonyl-[receptor-protein] + ATP = O-phospho-L-threonyl-[receptor-protein] + ADP + H(+)</text>
        <dbReference type="Rhea" id="RHEA:44880"/>
        <dbReference type="Rhea" id="RHEA-COMP:11024"/>
        <dbReference type="Rhea" id="RHEA-COMP:11025"/>
        <dbReference type="ChEBI" id="CHEBI:15378"/>
        <dbReference type="ChEBI" id="CHEBI:30013"/>
        <dbReference type="ChEBI" id="CHEBI:30616"/>
        <dbReference type="ChEBI" id="CHEBI:61977"/>
        <dbReference type="ChEBI" id="CHEBI:456216"/>
        <dbReference type="EC" id="2.7.11.30"/>
    </reaction>
</comment>
<comment type="catalytic activity">
    <reaction>
        <text>L-seryl-[receptor-protein] + ATP = O-phospho-L-seryl-[receptor-protein] + ADP + H(+)</text>
        <dbReference type="Rhea" id="RHEA:18673"/>
        <dbReference type="Rhea" id="RHEA-COMP:11022"/>
        <dbReference type="Rhea" id="RHEA-COMP:11023"/>
        <dbReference type="ChEBI" id="CHEBI:15378"/>
        <dbReference type="ChEBI" id="CHEBI:29999"/>
        <dbReference type="ChEBI" id="CHEBI:30616"/>
        <dbReference type="ChEBI" id="CHEBI:83421"/>
        <dbReference type="ChEBI" id="CHEBI:456216"/>
        <dbReference type="EC" id="2.7.11.30"/>
    </reaction>
</comment>
<comment type="cofactor">
    <cofactor evidence="1">
        <name>Mg(2+)</name>
        <dbReference type="ChEBI" id="CHEBI:18420"/>
    </cofactor>
    <cofactor evidence="1">
        <name>Mn(2+)</name>
        <dbReference type="ChEBI" id="CHEBI:29035"/>
    </cofactor>
</comment>
<comment type="activity regulation">
    <text evidence="7">Kept in an inactive conformation by FKBP1A preventing receptor activation in absence of ligand. CD109 is another inhibitor of the receptor.</text>
</comment>
<comment type="subunit">
    <text evidence="2 7">Homodimer; in the endoplasmic reticulum but also at the cell membrane. Heterohexamer; TGFB1, TGFB2 and TGFB3 homodimeric ligands assemble a functional receptor composed of two TGFBR1 and TGFBR2 heterodimers to form a ligand-receptor heterohexamer. The respective affinity of TGBRB1 and TGFBR2 for the ligands may modulate the kinetics of assembly of the receptor and may explain the different biological activities of TGFB1, TGFB2 and TGFB3. Component of a complex composed of TSC22D1 (via N-terminus), TGFBR1 and TGFBR2; the interaction between TSC22D1 and TGFBR1 is inhibited by SMAD7 and promoted by TGFB1 (By similarity). Interacts with CD109; inhibits TGF-beta receptor activation in keratinocytes. Interacts with RBPMS. Interacts with SMAD2, SMAD3 and ZFYVE9; ZFYVE9 recruits SMAD2 and SMAD3 to the TGF-beta receptor. Interacts with TRAF6 and MAP3K7; induces MAP3K7 activation by TRAF6. Interacts with PARD6A; involved in TGF-beta induced epithelial to mesenchymal transition. Interacts with NEDD4L (By similarity). Interacts with SMAD7, SMURF1 and SMURF2; SMAD7 recruits NEDD4L, SMURF1 and SMURF2 to the TGF-beta receptor (By similarity). Interacts with USP15 and VPS39 (By similarity). Interacts (unphosphorylated) with FKBP1A; prevents TGFBR1 phosphorylation by TGFBR2 and stabilizes it in the inactive conformation. Interacts with SDCBP (via C-terminus) (By similarity). Interacts with CAV1 and this interaction is impaired in the presence of SDCBP (By similarity). Interacts with APPL1; interaction is TGF beta dependent; mediates trafficking of the TGFBR1 from the endosomes to the nucleus via microtubules in a TRAF6-dependent manner (By similarity). Interacts with GPR50; this interaction promotes the constitutive activation of SMAD signaling pathway (By similarity).</text>
</comment>
<comment type="subcellular location">
    <subcellularLocation>
        <location evidence="2">Cell membrane</location>
        <topology evidence="2">Single-pass type I membrane protein</topology>
    </subcellularLocation>
    <subcellularLocation>
        <location evidence="2">Cell junction</location>
        <location evidence="2">Tight junction</location>
    </subcellularLocation>
    <subcellularLocation>
        <location evidence="2">Membrane raft</location>
    </subcellularLocation>
    <subcellularLocation>
        <location evidence="2">Cell surface</location>
    </subcellularLocation>
</comment>
<comment type="tissue specificity">
    <text>Urogenital ridge, testis, ovary, brain and lungs.</text>
</comment>
<comment type="PTM">
    <text evidence="2">Phosphorylated at basal levels in the absence of ligand. Activated upon phosphorylation by TGFBR2, mainly in the GS domain. Phosphorylation in the GS domain abrogates FKBP1A-binding (By similarity).</text>
</comment>
<comment type="PTM">
    <text evidence="2">N-Glycosylated.</text>
</comment>
<comment type="PTM">
    <text evidence="2">Ubiquitinated; undergoes ubiquitination catalyzed by several E3 ubiquitin ligases including SMURF1, SMURF2 and NEDD4L2. Results in the proteasomal and/or lysosomal degradation of the receptor thereby negatively regulating its activity. Deubiquitinated by USP15, leading to stabilization of the protein and enhanced TGF-beta signal. Its ubiquitination and proteasome-mediated degradation is negatively regulated by SDCBP (By similarity).</text>
</comment>
<comment type="similarity">
    <text evidence="8">Belongs to the protein kinase superfamily. TKL Ser/Thr protein kinase family. TGFB receptor subfamily.</text>
</comment>
<evidence type="ECO:0000250" key="1"/>
<evidence type="ECO:0000250" key="2">
    <source>
        <dbReference type="UniProtKB" id="P36897"/>
    </source>
</evidence>
<evidence type="ECO:0000255" key="3"/>
<evidence type="ECO:0000255" key="4">
    <source>
        <dbReference type="PROSITE-ProRule" id="PRU00159"/>
    </source>
</evidence>
<evidence type="ECO:0000255" key="5">
    <source>
        <dbReference type="PROSITE-ProRule" id="PRU00585"/>
    </source>
</evidence>
<evidence type="ECO:0000255" key="6">
    <source>
        <dbReference type="PROSITE-ProRule" id="PRU10027"/>
    </source>
</evidence>
<evidence type="ECO:0000269" key="7">
    <source>
    </source>
</evidence>
<evidence type="ECO:0000305" key="8"/>
<name>TGFR1_RAT</name>
<organism>
    <name type="scientific">Rattus norvegicus</name>
    <name type="common">Rat</name>
    <dbReference type="NCBI Taxonomy" id="10116"/>
    <lineage>
        <taxon>Eukaryota</taxon>
        <taxon>Metazoa</taxon>
        <taxon>Chordata</taxon>
        <taxon>Craniata</taxon>
        <taxon>Vertebrata</taxon>
        <taxon>Euteleostomi</taxon>
        <taxon>Mammalia</taxon>
        <taxon>Eutheria</taxon>
        <taxon>Euarchontoglires</taxon>
        <taxon>Glires</taxon>
        <taxon>Rodentia</taxon>
        <taxon>Myomorpha</taxon>
        <taxon>Muroidea</taxon>
        <taxon>Muridae</taxon>
        <taxon>Murinae</taxon>
        <taxon>Rattus</taxon>
    </lineage>
</organism>
<protein>
    <recommendedName>
        <fullName>TGF-beta receptor type-1</fullName>
        <shortName>TGFR-1</shortName>
        <ecNumber>2.7.11.30</ecNumber>
    </recommendedName>
    <alternativeName>
        <fullName>Serine/threonine-protein kinase receptor R4</fullName>
        <shortName>SKR4</shortName>
    </alternativeName>
    <alternativeName>
        <fullName>TGF-beta type I receptor</fullName>
    </alternativeName>
    <alternativeName>
        <fullName>Transforming growth factor-beta receptor type I</fullName>
        <shortName>TGF-beta receptor type I</shortName>
        <shortName>TbetaR-I</shortName>
    </alternativeName>
</protein>
<keyword id="KW-0053">Apoptosis</keyword>
<keyword id="KW-0067">ATP-binding</keyword>
<keyword id="KW-0965">Cell junction</keyword>
<keyword id="KW-1003">Cell membrane</keyword>
<keyword id="KW-0221">Differentiation</keyword>
<keyword id="KW-1015">Disulfide bond</keyword>
<keyword id="KW-0325">Glycoprotein</keyword>
<keyword id="KW-0341">Growth regulation</keyword>
<keyword id="KW-1017">Isopeptide bond</keyword>
<keyword id="KW-0418">Kinase</keyword>
<keyword id="KW-0460">Magnesium</keyword>
<keyword id="KW-0464">Manganese</keyword>
<keyword id="KW-0472">Membrane</keyword>
<keyword id="KW-0479">Metal-binding</keyword>
<keyword id="KW-0547">Nucleotide-binding</keyword>
<keyword id="KW-0597">Phosphoprotein</keyword>
<keyword id="KW-0675">Receptor</keyword>
<keyword id="KW-1185">Reference proteome</keyword>
<keyword id="KW-0723">Serine/threonine-protein kinase</keyword>
<keyword id="KW-0732">Signal</keyword>
<keyword id="KW-0796">Tight junction</keyword>
<keyword id="KW-0808">Transferase</keyword>
<keyword id="KW-0812">Transmembrane</keyword>
<keyword id="KW-1133">Transmembrane helix</keyword>
<keyword id="KW-0832">Ubl conjugation</keyword>
<feature type="signal peptide" evidence="1">
    <location>
        <begin position="1"/>
        <end position="29"/>
    </location>
</feature>
<feature type="chain" id="PRO_0000024425" description="TGF-beta receptor type-1">
    <location>
        <begin position="30"/>
        <end position="501"/>
    </location>
</feature>
<feature type="topological domain" description="Extracellular" evidence="3">
    <location>
        <begin position="30"/>
        <end position="124"/>
    </location>
</feature>
<feature type="transmembrane region" description="Helical" evidence="3">
    <location>
        <begin position="125"/>
        <end position="145"/>
    </location>
</feature>
<feature type="topological domain" description="Cytoplasmic" evidence="3">
    <location>
        <begin position="146"/>
        <end position="501"/>
    </location>
</feature>
<feature type="domain" description="GS" evidence="5">
    <location>
        <begin position="173"/>
        <end position="202"/>
    </location>
</feature>
<feature type="domain" description="Protein kinase" evidence="4">
    <location>
        <begin position="203"/>
        <end position="493"/>
    </location>
</feature>
<feature type="short sequence motif" description="FKBP1A-binding">
    <location>
        <begin position="191"/>
        <end position="192"/>
    </location>
</feature>
<feature type="active site" description="Proton acceptor" evidence="4 6">
    <location>
        <position position="331"/>
    </location>
</feature>
<feature type="binding site" evidence="4">
    <location>
        <begin position="209"/>
        <end position="217"/>
    </location>
    <ligand>
        <name>ATP</name>
        <dbReference type="ChEBI" id="CHEBI:30616"/>
    </ligand>
</feature>
<feature type="binding site" evidence="4">
    <location>
        <position position="230"/>
    </location>
    <ligand>
        <name>ATP</name>
        <dbReference type="ChEBI" id="CHEBI:30616"/>
    </ligand>
</feature>
<feature type="modified residue" description="Phosphoserine" evidence="2">
    <location>
        <position position="163"/>
    </location>
</feature>
<feature type="modified residue" description="Phosphothreonine; by TGFBR2" evidence="2">
    <location>
        <position position="183"/>
    </location>
</feature>
<feature type="modified residue" description="Phosphothreonine; by TGFBR2" evidence="2">
    <location>
        <position position="184"/>
    </location>
</feature>
<feature type="modified residue" description="Phosphoserine; by TGFBR2" evidence="2">
    <location>
        <position position="185"/>
    </location>
</feature>
<feature type="modified residue" description="Phosphoserine; by TGFBR2" evidence="2">
    <location>
        <position position="187"/>
    </location>
</feature>
<feature type="modified residue" description="Phosphoserine; by TGFBR2" evidence="2">
    <location>
        <position position="189"/>
    </location>
</feature>
<feature type="glycosylation site" description="N-linked (GlcNAc...) asparagine" evidence="3">
    <location>
        <position position="41"/>
    </location>
</feature>
<feature type="disulfide bond" evidence="2">
    <location>
        <begin position="32"/>
        <end position="50"/>
    </location>
</feature>
<feature type="disulfide bond" evidence="2">
    <location>
        <begin position="34"/>
        <end position="37"/>
    </location>
</feature>
<feature type="disulfide bond" evidence="2">
    <location>
        <begin position="44"/>
        <end position="67"/>
    </location>
</feature>
<feature type="disulfide bond" evidence="2">
    <location>
        <begin position="82"/>
        <end position="94"/>
    </location>
</feature>
<feature type="disulfide bond" evidence="2">
    <location>
        <begin position="95"/>
        <end position="100"/>
    </location>
</feature>
<feature type="cross-link" description="Glycyl lysine isopeptide (Lys-Gly) (interchain with G-Cter in SUMO)">
    <location>
        <position position="389"/>
    </location>
</feature>
<proteinExistence type="evidence at protein level"/>